<organism>
    <name type="scientific">Salmonella schwarzengrund (strain CVM19633)</name>
    <dbReference type="NCBI Taxonomy" id="439843"/>
    <lineage>
        <taxon>Bacteria</taxon>
        <taxon>Pseudomonadati</taxon>
        <taxon>Pseudomonadota</taxon>
        <taxon>Gammaproteobacteria</taxon>
        <taxon>Enterobacterales</taxon>
        <taxon>Enterobacteriaceae</taxon>
        <taxon>Salmonella</taxon>
    </lineage>
</organism>
<proteinExistence type="inferred from homology"/>
<evidence type="ECO:0000255" key="1">
    <source>
        <dbReference type="HAMAP-Rule" id="MF_01191"/>
    </source>
</evidence>
<protein>
    <recommendedName>
        <fullName evidence="1">Probable succinate transporter subunit YjjB</fullName>
    </recommendedName>
</protein>
<sequence>MGIIDFLLALMQDMILSAIPAVGFAMVFNVPHRALPWCALLGALGHGSRMLMMSAGFNIEWSTFMASLLVGSIGIQWSRWYLAHPKVFTVAAVIPMFPGISAYTAMISAVKISHLGYSEPMMITLLTNFLKASSIVGALSIGLSVPGLWLYRKRPRV</sequence>
<comment type="function">
    <text evidence="1">Involved in succinate export with YjjP. Both proteins are required for export.</text>
</comment>
<comment type="subunit">
    <text evidence="1">The transporter is composed of YjjB and YjjP.</text>
</comment>
<comment type="subcellular location">
    <subcellularLocation>
        <location evidence="1">Cell inner membrane</location>
        <topology evidence="1">Multi-pass membrane protein</topology>
    </subcellularLocation>
</comment>
<comment type="similarity">
    <text evidence="1">Belongs to the ThrE exporter (TC 2.A.79) family.</text>
</comment>
<gene>
    <name evidence="1" type="primary">yjjB</name>
    <name type="ordered locus">SeSA_A4799</name>
</gene>
<reference key="1">
    <citation type="journal article" date="2011" name="J. Bacteriol.">
        <title>Comparative genomics of 28 Salmonella enterica isolates: evidence for CRISPR-mediated adaptive sublineage evolution.</title>
        <authorList>
            <person name="Fricke W.F."/>
            <person name="Mammel M.K."/>
            <person name="McDermott P.F."/>
            <person name="Tartera C."/>
            <person name="White D.G."/>
            <person name="Leclerc J.E."/>
            <person name="Ravel J."/>
            <person name="Cebula T.A."/>
        </authorList>
    </citation>
    <scope>NUCLEOTIDE SEQUENCE [LARGE SCALE GENOMIC DNA]</scope>
    <source>
        <strain>CVM19633</strain>
    </source>
</reference>
<accession>B4TU22</accession>
<feature type="chain" id="PRO_1000138376" description="Probable succinate transporter subunit YjjB">
    <location>
        <begin position="1"/>
        <end position="157"/>
    </location>
</feature>
<feature type="transmembrane region" description="Helical" evidence="1">
    <location>
        <begin position="8"/>
        <end position="28"/>
    </location>
</feature>
<feature type="transmembrane region" description="Helical" evidence="1">
    <location>
        <begin position="55"/>
        <end position="75"/>
    </location>
</feature>
<feature type="transmembrane region" description="Helical" evidence="1">
    <location>
        <begin position="87"/>
        <end position="107"/>
    </location>
</feature>
<feature type="transmembrane region" description="Helical" evidence="1">
    <location>
        <begin position="129"/>
        <end position="149"/>
    </location>
</feature>
<dbReference type="EMBL" id="CP001127">
    <property type="protein sequence ID" value="ACF92609.1"/>
    <property type="molecule type" value="Genomic_DNA"/>
</dbReference>
<dbReference type="RefSeq" id="WP_000511329.1">
    <property type="nucleotide sequence ID" value="NC_011094.1"/>
</dbReference>
<dbReference type="KEGG" id="sew:SeSA_A4799"/>
<dbReference type="HOGENOM" id="CLU_117642_1_0_6"/>
<dbReference type="Proteomes" id="UP000001865">
    <property type="component" value="Chromosome"/>
</dbReference>
<dbReference type="GO" id="GO:0005886">
    <property type="term" value="C:plasma membrane"/>
    <property type="evidence" value="ECO:0007669"/>
    <property type="project" value="UniProtKB-SubCell"/>
</dbReference>
<dbReference type="GO" id="GO:0015744">
    <property type="term" value="P:succinate transport"/>
    <property type="evidence" value="ECO:0007669"/>
    <property type="project" value="UniProtKB-UniRule"/>
</dbReference>
<dbReference type="HAMAP" id="MF_01191">
    <property type="entry name" value="YjjB"/>
    <property type="match status" value="1"/>
</dbReference>
<dbReference type="InterPro" id="IPR024528">
    <property type="entry name" value="ThrE_2"/>
</dbReference>
<dbReference type="InterPro" id="IPR050539">
    <property type="entry name" value="ThrE_Dicarb/AminoAcid_Exp"/>
</dbReference>
<dbReference type="InterPro" id="IPR020914">
    <property type="entry name" value="YjjB"/>
</dbReference>
<dbReference type="NCBIfam" id="NF007391">
    <property type="entry name" value="PRK09917.1"/>
    <property type="match status" value="1"/>
</dbReference>
<dbReference type="PANTHER" id="PTHR34390:SF1">
    <property type="entry name" value="SUCCINATE TRANSPORTER SUBUNIT YJJB-RELATED"/>
    <property type="match status" value="1"/>
</dbReference>
<dbReference type="PANTHER" id="PTHR34390">
    <property type="entry name" value="UPF0442 PROTEIN YJJB-RELATED"/>
    <property type="match status" value="1"/>
</dbReference>
<dbReference type="Pfam" id="PF12821">
    <property type="entry name" value="ThrE_2"/>
    <property type="match status" value="1"/>
</dbReference>
<keyword id="KW-0997">Cell inner membrane</keyword>
<keyword id="KW-1003">Cell membrane</keyword>
<keyword id="KW-0472">Membrane</keyword>
<keyword id="KW-0812">Transmembrane</keyword>
<keyword id="KW-1133">Transmembrane helix</keyword>
<keyword id="KW-0813">Transport</keyword>
<name>YJJB_SALSV</name>